<gene>
    <name type="primary">nifA</name>
</gene>
<name>NIFA_AZOCH</name>
<reference key="1">
    <citation type="journal article" date="1988" name="J. Gen. Microbiol.">
        <title>Further analysis of nitrogen fixation (nif) genes in Azotobacter chroococcum: identification and expression in Klebsiella pneumoniae of nifS, nifV, nifM, and nifB genes and localization of nifE/N-, nifU-, nifA- and fixABC-like genes.</title>
        <authorList>
            <person name="Evans D."/>
            <person name="Jones R."/>
            <person name="Woodley P."/>
            <person name="Robson R."/>
        </authorList>
    </citation>
    <scope>NUCLEOTIDE SEQUENCE [GENOMIC DNA]</scope>
</reference>
<proteinExistence type="inferred from homology"/>
<comment type="function">
    <text evidence="1">Required for activation of most nif operons, which are directly involved in nitrogen fixation.</text>
</comment>
<comment type="subunit">
    <text evidence="1">Interacts with sigma-54.</text>
</comment>
<protein>
    <recommendedName>
        <fullName>Nif-specific regulatory protein</fullName>
    </recommendedName>
</protein>
<sequence length="129" mass="14426">EFLLTKIGRQQGRPLTVTDSAIRLLMSHRWPGNVRDVENCLERSAIMSEDGTITRDVVSLTGVDNESPPLAAPLPEVNLADENLDDRERVIAALEQAGWVQAKAARLLGMTPRQIAYRIQTLNIHMRKI</sequence>
<feature type="chain" id="PRO_0000081302" description="Nif-specific regulatory protein">
    <location>
        <begin position="1" status="less than"/>
        <end position="129"/>
    </location>
</feature>
<feature type="domain" description="Sigma-54 factor interaction" evidence="2">
    <location>
        <begin position="1" status="less than"/>
        <end position="46"/>
    </location>
</feature>
<feature type="DNA-binding region" description="H-T-H motif" evidence="1">
    <location>
        <begin position="101"/>
        <end position="129"/>
    </location>
</feature>
<feature type="non-terminal residue">
    <location>
        <position position="1"/>
    </location>
</feature>
<organism>
    <name type="scientific">Azotobacter chroococcum mcd 1</name>
    <dbReference type="NCBI Taxonomy" id="355"/>
    <lineage>
        <taxon>Bacteria</taxon>
        <taxon>Pseudomonadati</taxon>
        <taxon>Pseudomonadota</taxon>
        <taxon>Gammaproteobacteria</taxon>
        <taxon>Pseudomonadales</taxon>
        <taxon>Pseudomonadaceae</taxon>
        <taxon>Azotobacter</taxon>
    </lineage>
</organism>
<accession>P56269</accession>
<dbReference type="PIR" id="A60869">
    <property type="entry name" value="A60869"/>
</dbReference>
<dbReference type="SMR" id="P56269"/>
<dbReference type="GO" id="GO:0005524">
    <property type="term" value="F:ATP binding"/>
    <property type="evidence" value="ECO:0007669"/>
    <property type="project" value="UniProtKB-KW"/>
</dbReference>
<dbReference type="GO" id="GO:0043565">
    <property type="term" value="F:sequence-specific DNA binding"/>
    <property type="evidence" value="ECO:0007669"/>
    <property type="project" value="InterPro"/>
</dbReference>
<dbReference type="GO" id="GO:0009399">
    <property type="term" value="P:nitrogen fixation"/>
    <property type="evidence" value="ECO:0007669"/>
    <property type="project" value="UniProtKB-KW"/>
</dbReference>
<dbReference type="GO" id="GO:0000160">
    <property type="term" value="P:phosphorelay signal transduction system"/>
    <property type="evidence" value="ECO:0007669"/>
    <property type="project" value="UniProtKB-KW"/>
</dbReference>
<dbReference type="GO" id="GO:0006355">
    <property type="term" value="P:regulation of DNA-templated transcription"/>
    <property type="evidence" value="ECO:0007669"/>
    <property type="project" value="InterPro"/>
</dbReference>
<dbReference type="Gene3D" id="1.10.8.60">
    <property type="match status" value="1"/>
</dbReference>
<dbReference type="Gene3D" id="1.10.10.60">
    <property type="entry name" value="Homeodomain-like"/>
    <property type="match status" value="1"/>
</dbReference>
<dbReference type="InterPro" id="IPR009057">
    <property type="entry name" value="Homeodomain-like_sf"/>
</dbReference>
<dbReference type="InterPro" id="IPR002197">
    <property type="entry name" value="HTH_Fis"/>
</dbReference>
<dbReference type="InterPro" id="IPR027417">
    <property type="entry name" value="P-loop_NTPase"/>
</dbReference>
<dbReference type="InterPro" id="IPR002078">
    <property type="entry name" value="Sigma_54_int"/>
</dbReference>
<dbReference type="PANTHER" id="PTHR32071:SF117">
    <property type="entry name" value="PTS-DEPENDENT DIHYDROXYACETONE KINASE OPERON REGULATORY PROTEIN-RELATED"/>
    <property type="match status" value="1"/>
</dbReference>
<dbReference type="PANTHER" id="PTHR32071">
    <property type="entry name" value="TRANSCRIPTIONAL REGULATORY PROTEIN"/>
    <property type="match status" value="1"/>
</dbReference>
<dbReference type="Pfam" id="PF02954">
    <property type="entry name" value="HTH_8"/>
    <property type="match status" value="1"/>
</dbReference>
<dbReference type="PRINTS" id="PR01590">
    <property type="entry name" value="HTHFIS"/>
</dbReference>
<dbReference type="SUPFAM" id="SSF46689">
    <property type="entry name" value="Homeodomain-like"/>
    <property type="match status" value="1"/>
</dbReference>
<dbReference type="SUPFAM" id="SSF52540">
    <property type="entry name" value="P-loop containing nucleoside triphosphate hydrolases"/>
    <property type="match status" value="1"/>
</dbReference>
<dbReference type="PROSITE" id="PS50045">
    <property type="entry name" value="SIGMA54_INTERACT_4"/>
    <property type="match status" value="1"/>
</dbReference>
<keyword id="KW-0010">Activator</keyword>
<keyword id="KW-0067">ATP-binding</keyword>
<keyword id="KW-0238">DNA-binding</keyword>
<keyword id="KW-0535">Nitrogen fixation</keyword>
<keyword id="KW-0547">Nucleotide-binding</keyword>
<keyword id="KW-0804">Transcription</keyword>
<keyword id="KW-0805">Transcription regulation</keyword>
<keyword id="KW-0902">Two-component regulatory system</keyword>
<evidence type="ECO:0000250" key="1"/>
<evidence type="ECO:0000255" key="2">
    <source>
        <dbReference type="PROSITE-ProRule" id="PRU00193"/>
    </source>
</evidence>